<name>AMPP3_LEPMJ</name>
<reference key="1">
    <citation type="journal article" date="2011" name="Nat. Commun.">
        <title>Effector diversification within compartments of the Leptosphaeria maculans genome affected by Repeat-Induced Point mutations.</title>
        <authorList>
            <person name="Rouxel T."/>
            <person name="Grandaubert J."/>
            <person name="Hane J.K."/>
            <person name="Hoede C."/>
            <person name="van de Wouw A.P."/>
            <person name="Couloux A."/>
            <person name="Dominguez V."/>
            <person name="Anthouard V."/>
            <person name="Bally P."/>
            <person name="Bourras S."/>
            <person name="Cozijnsen A.J."/>
            <person name="Ciuffetti L.M."/>
            <person name="Degrave A."/>
            <person name="Dilmaghani A."/>
            <person name="Duret L."/>
            <person name="Fudal I."/>
            <person name="Goodwin S.B."/>
            <person name="Gout L."/>
            <person name="Glaser N."/>
            <person name="Linglin J."/>
            <person name="Kema G.H.J."/>
            <person name="Lapalu N."/>
            <person name="Lawrence C.B."/>
            <person name="May K."/>
            <person name="Meyer M."/>
            <person name="Ollivier B."/>
            <person name="Poulain J."/>
            <person name="Schoch C.L."/>
            <person name="Simon A."/>
            <person name="Spatafora J.W."/>
            <person name="Stachowiak A."/>
            <person name="Turgeon B.G."/>
            <person name="Tyler B.M."/>
            <person name="Vincent D."/>
            <person name="Weissenbach J."/>
            <person name="Amselem J."/>
            <person name="Quesneville H."/>
            <person name="Oliver R.P."/>
            <person name="Wincker P."/>
            <person name="Balesdent M.-H."/>
            <person name="Howlett B.J."/>
        </authorList>
    </citation>
    <scope>NUCLEOTIDE SEQUENCE [LARGE SCALE GENOMIC DNA]</scope>
    <source>
        <strain>JN3 / isolate v23.1.3 / race Av1-4-5-6-7-8</strain>
    </source>
</reference>
<protein>
    <recommendedName>
        <fullName>Probable Xaa-Pro aminopeptidase PEPP</fullName>
        <ecNumber>3.4.11.9</ecNumber>
    </recommendedName>
    <alternativeName>
        <fullName>Aminoacylproline aminopeptidase</fullName>
    </alternativeName>
    <alternativeName>
        <fullName>Prolidase</fullName>
    </alternativeName>
</protein>
<keyword id="KW-0031">Aminopeptidase</keyword>
<keyword id="KW-0378">Hydrolase</keyword>
<keyword id="KW-0464">Manganese</keyword>
<keyword id="KW-0479">Metal-binding</keyword>
<keyword id="KW-0482">Metalloprotease</keyword>
<keyword id="KW-0645">Protease</keyword>
<keyword id="KW-1185">Reference proteome</keyword>
<organism>
    <name type="scientific">Leptosphaeria maculans (strain JN3 / isolate v23.1.3 / race Av1-4-5-6-7-8)</name>
    <name type="common">Blackleg fungus</name>
    <name type="synonym">Phoma lingam</name>
    <dbReference type="NCBI Taxonomy" id="985895"/>
    <lineage>
        <taxon>Eukaryota</taxon>
        <taxon>Fungi</taxon>
        <taxon>Dikarya</taxon>
        <taxon>Ascomycota</taxon>
        <taxon>Pezizomycotina</taxon>
        <taxon>Dothideomycetes</taxon>
        <taxon>Pleosporomycetidae</taxon>
        <taxon>Pleosporales</taxon>
        <taxon>Pleosporineae</taxon>
        <taxon>Leptosphaeriaceae</taxon>
        <taxon>Plenodomus</taxon>
        <taxon>Plenodomus lingam/Leptosphaeria maculans species complex</taxon>
    </lineage>
</organism>
<comment type="function">
    <text evidence="1">Catalyzes the removal of a penultimate prolyl residue from the N-termini of peptides.</text>
</comment>
<comment type="catalytic activity">
    <reaction>
        <text>Release of any N-terminal amino acid, including proline, that is linked to proline, even from a dipeptide or tripeptide.</text>
        <dbReference type="EC" id="3.4.11.9"/>
    </reaction>
</comment>
<comment type="cofactor">
    <cofactor evidence="1">
        <name>Mn(2+)</name>
        <dbReference type="ChEBI" id="CHEBI:29035"/>
    </cofactor>
    <text evidence="1">Binds 2 manganese ions per subunit.</text>
</comment>
<comment type="similarity">
    <text evidence="2">Belongs to the peptidase M24B family.</text>
</comment>
<feature type="chain" id="PRO_0000411873" description="Probable Xaa-Pro aminopeptidase PEPP">
    <location>
        <begin position="1"/>
        <end position="562"/>
    </location>
</feature>
<feature type="binding site" evidence="1">
    <location>
        <position position="358"/>
    </location>
    <ligand>
        <name>Mn(2+)</name>
        <dbReference type="ChEBI" id="CHEBI:29035"/>
        <label>2</label>
    </ligand>
</feature>
<feature type="binding site" evidence="1">
    <location>
        <position position="369"/>
    </location>
    <ligand>
        <name>Mn(2+)</name>
        <dbReference type="ChEBI" id="CHEBI:29035"/>
        <label>1</label>
    </ligand>
</feature>
<feature type="binding site" evidence="1">
    <location>
        <position position="369"/>
    </location>
    <ligand>
        <name>Mn(2+)</name>
        <dbReference type="ChEBI" id="CHEBI:29035"/>
        <label>2</label>
    </ligand>
</feature>
<feature type="binding site" evidence="1">
    <location>
        <position position="492"/>
    </location>
    <ligand>
        <name>Mn(2+)</name>
        <dbReference type="ChEBI" id="CHEBI:29035"/>
        <label>1</label>
    </ligand>
</feature>
<feature type="binding site" evidence="1">
    <location>
        <position position="532"/>
    </location>
    <ligand>
        <name>Mn(2+)</name>
        <dbReference type="ChEBI" id="CHEBI:29035"/>
        <label>1</label>
    </ligand>
</feature>
<feature type="binding site" evidence="1">
    <location>
        <position position="532"/>
    </location>
    <ligand>
        <name>Mn(2+)</name>
        <dbReference type="ChEBI" id="CHEBI:29035"/>
        <label>2</label>
    </ligand>
</feature>
<proteinExistence type="inferred from homology"/>
<gene>
    <name type="primary">PEPP</name>
    <name type="ORF">Lema_P059740</name>
</gene>
<sequence length="562" mass="63896">MTRTMVVTVRFCTFLINVDDEWDANPWLPEQVSLDPRPPLKHRPKLNFDMSAFSSRGMRLARTLQRRYTRRPLPTYQQPTPFTFRILPAEDREWCSISTMAIAENYEDVLKGKYPAKEHARKVAKWIIEKGGDKNGTIYLEAQKQKLNEDNDGEAPFRQRRYFFYLSGCELPDSYLTYEIPNDRLTLFIPPVEPEEVIWSGLPMSVDEAKAKYDIDDCKTTRDINAHLTSTSESAQSTIYAIPEQVSDNITFLSYKDKEFKQLKPAIEYCRVTKTDYEIALIRKANEISTAAHIAVMKAASKAKNECELEAVFLKSCVERNAKNQAYHSIVAAGENGATLHYVNNAAPISEQNLLLLDAGCEVDCYASDITRTFPIKGHFNEESLAIYKIVLDMQHQCINALKAGVLWDSIHELAHKIAIKGLLDLGILKGDADAIFKARASVAFFPHGLGHYLGMDTHDTGGNANYADKDVMFRYLRVRGTLPERSVITVEPGIYFCRFIIEPYLKDEEKKQFFDEKVLEKYWSVGGVRIEDNILITKEGIENLTPTPKEVDEITALVQSA</sequence>
<evidence type="ECO:0000250" key="1"/>
<evidence type="ECO:0000305" key="2"/>
<dbReference type="EC" id="3.4.11.9"/>
<dbReference type="EMBL" id="FP929065">
    <property type="protein sequence ID" value="CBX90940.1"/>
    <property type="molecule type" value="Genomic_DNA"/>
</dbReference>
<dbReference type="RefSeq" id="XP_003834305.1">
    <property type="nucleotide sequence ID" value="XM_003834257.1"/>
</dbReference>
<dbReference type="SMR" id="E4ZHV7"/>
<dbReference type="FunCoup" id="E4ZHV7">
    <property type="interactions" value="379"/>
</dbReference>
<dbReference type="STRING" id="985895.E4ZHV7"/>
<dbReference type="EnsemblFungi" id="CBX90940">
    <property type="protein sequence ID" value="CBX90940"/>
    <property type="gene ID" value="LEMA_P059740.1"/>
</dbReference>
<dbReference type="VEuPathDB" id="FungiDB:LEMA_P059740.1"/>
<dbReference type="eggNOG" id="KOG2737">
    <property type="taxonomic scope" value="Eukaryota"/>
</dbReference>
<dbReference type="HOGENOM" id="CLU_017266_1_2_1"/>
<dbReference type="InParanoid" id="E4ZHV7"/>
<dbReference type="OMA" id="DAHALFF"/>
<dbReference type="OrthoDB" id="10261878at2759"/>
<dbReference type="Proteomes" id="UP000002668">
    <property type="component" value="Genome"/>
</dbReference>
<dbReference type="GO" id="GO:0030145">
    <property type="term" value="F:manganese ion binding"/>
    <property type="evidence" value="ECO:0007669"/>
    <property type="project" value="InterPro"/>
</dbReference>
<dbReference type="GO" id="GO:0070006">
    <property type="term" value="F:metalloaminopeptidase activity"/>
    <property type="evidence" value="ECO:0007669"/>
    <property type="project" value="InterPro"/>
</dbReference>
<dbReference type="GO" id="GO:0006508">
    <property type="term" value="P:proteolysis"/>
    <property type="evidence" value="ECO:0007669"/>
    <property type="project" value="UniProtKB-KW"/>
</dbReference>
<dbReference type="CDD" id="cd01087">
    <property type="entry name" value="Prolidase"/>
    <property type="match status" value="1"/>
</dbReference>
<dbReference type="FunFam" id="3.90.230.10:FF:000002">
    <property type="entry name" value="Xaa-Pro aminopeptidase 3"/>
    <property type="match status" value="1"/>
</dbReference>
<dbReference type="Gene3D" id="3.90.230.10">
    <property type="entry name" value="Creatinase/methionine aminopeptidase superfamily"/>
    <property type="match status" value="1"/>
</dbReference>
<dbReference type="Gene3D" id="3.40.350.10">
    <property type="entry name" value="Creatinase/prolidase N-terminal domain"/>
    <property type="match status" value="1"/>
</dbReference>
<dbReference type="InterPro" id="IPR007865">
    <property type="entry name" value="Aminopep_P_N"/>
</dbReference>
<dbReference type="InterPro" id="IPR029149">
    <property type="entry name" value="Creatin/AminoP/Spt16_N"/>
</dbReference>
<dbReference type="InterPro" id="IPR036005">
    <property type="entry name" value="Creatinase/aminopeptidase-like"/>
</dbReference>
<dbReference type="InterPro" id="IPR000994">
    <property type="entry name" value="Pept_M24"/>
</dbReference>
<dbReference type="InterPro" id="IPR052433">
    <property type="entry name" value="X-Pro_dipept-like"/>
</dbReference>
<dbReference type="PANTHER" id="PTHR43226">
    <property type="entry name" value="XAA-PRO AMINOPEPTIDASE 3"/>
    <property type="match status" value="1"/>
</dbReference>
<dbReference type="PANTHER" id="PTHR43226:SF1">
    <property type="entry name" value="XAA-PRO DIPEPTIDASE"/>
    <property type="match status" value="1"/>
</dbReference>
<dbReference type="Pfam" id="PF05195">
    <property type="entry name" value="AMP_N"/>
    <property type="match status" value="1"/>
</dbReference>
<dbReference type="Pfam" id="PF00557">
    <property type="entry name" value="Peptidase_M24"/>
    <property type="match status" value="1"/>
</dbReference>
<dbReference type="SMART" id="SM01011">
    <property type="entry name" value="AMP_N"/>
    <property type="match status" value="1"/>
</dbReference>
<dbReference type="SUPFAM" id="SSF55920">
    <property type="entry name" value="Creatinase/aminopeptidase"/>
    <property type="match status" value="1"/>
</dbReference>
<dbReference type="SUPFAM" id="SSF53092">
    <property type="entry name" value="Creatinase/prolidase N-terminal domain"/>
    <property type="match status" value="1"/>
</dbReference>
<accession>E4ZHV7</accession>